<feature type="signal peptide" evidence="2">
    <location>
        <begin position="1"/>
        <end position="28"/>
    </location>
</feature>
<feature type="chain" id="PRO_0000420688" description="DOMON domain-containing protein FRRS1L">
    <location>
        <begin position="29"/>
        <end position="293"/>
    </location>
</feature>
<feature type="transmembrane region" description="Helical" evidence="2">
    <location>
        <begin position="271"/>
        <end position="291"/>
    </location>
</feature>
<feature type="domain" description="DOMON" evidence="3">
    <location>
        <begin position="119"/>
        <end position="234"/>
    </location>
</feature>
<feature type="region of interest" description="Disordered" evidence="4">
    <location>
        <begin position="29"/>
        <end position="60"/>
    </location>
</feature>
<feature type="compositionally biased region" description="Basic and acidic residues" evidence="4">
    <location>
        <begin position="46"/>
        <end position="60"/>
    </location>
</feature>
<name>FRS1L_MOUSE</name>
<organism>
    <name type="scientific">Mus musculus</name>
    <name type="common">Mouse</name>
    <dbReference type="NCBI Taxonomy" id="10090"/>
    <lineage>
        <taxon>Eukaryota</taxon>
        <taxon>Metazoa</taxon>
        <taxon>Chordata</taxon>
        <taxon>Craniata</taxon>
        <taxon>Vertebrata</taxon>
        <taxon>Euteleostomi</taxon>
        <taxon>Mammalia</taxon>
        <taxon>Eutheria</taxon>
        <taxon>Euarchontoglires</taxon>
        <taxon>Glires</taxon>
        <taxon>Rodentia</taxon>
        <taxon>Myomorpha</taxon>
        <taxon>Muroidea</taxon>
        <taxon>Muridae</taxon>
        <taxon>Murinae</taxon>
        <taxon>Mus</taxon>
        <taxon>Mus</taxon>
    </lineage>
</organism>
<accession>B1AXV0</accession>
<accession>A3KMM1</accession>
<accession>Q8BYS5</accession>
<reference key="1">
    <citation type="journal article" date="2009" name="PLoS Biol.">
        <title>Lineage-specific biology revealed by a finished genome assembly of the mouse.</title>
        <authorList>
            <person name="Church D.M."/>
            <person name="Goodstadt L."/>
            <person name="Hillier L.W."/>
            <person name="Zody M.C."/>
            <person name="Goldstein S."/>
            <person name="She X."/>
            <person name="Bult C.J."/>
            <person name="Agarwala R."/>
            <person name="Cherry J.L."/>
            <person name="DiCuccio M."/>
            <person name="Hlavina W."/>
            <person name="Kapustin Y."/>
            <person name="Meric P."/>
            <person name="Maglott D."/>
            <person name="Birtle Z."/>
            <person name="Marques A.C."/>
            <person name="Graves T."/>
            <person name="Zhou S."/>
            <person name="Teague B."/>
            <person name="Potamousis K."/>
            <person name="Churas C."/>
            <person name="Place M."/>
            <person name="Herschleb J."/>
            <person name="Runnheim R."/>
            <person name="Forrest D."/>
            <person name="Amos-Landgraf J."/>
            <person name="Schwartz D.C."/>
            <person name="Cheng Z."/>
            <person name="Lindblad-Toh K."/>
            <person name="Eichler E.E."/>
            <person name="Ponting C.P."/>
        </authorList>
    </citation>
    <scope>NUCLEOTIDE SEQUENCE [LARGE SCALE GENOMIC DNA]</scope>
    <source>
        <strain>C57BL/6J</strain>
    </source>
</reference>
<reference key="2">
    <citation type="journal article" date="2004" name="Genome Res.">
        <title>The status, quality, and expansion of the NIH full-length cDNA project: the Mammalian Gene Collection (MGC).</title>
        <authorList>
            <consortium name="The MGC Project Team"/>
        </authorList>
    </citation>
    <scope>NUCLEOTIDE SEQUENCE [LARGE SCALE MRNA]</scope>
    <source>
        <tissue>Brain</tissue>
    </source>
</reference>
<reference key="3">
    <citation type="journal article" date="2005" name="Science">
        <title>The transcriptional landscape of the mammalian genome.</title>
        <authorList>
            <person name="Carninci P."/>
            <person name="Kasukawa T."/>
            <person name="Katayama S."/>
            <person name="Gough J."/>
            <person name="Frith M.C."/>
            <person name="Maeda N."/>
            <person name="Oyama R."/>
            <person name="Ravasi T."/>
            <person name="Lenhard B."/>
            <person name="Wells C."/>
            <person name="Kodzius R."/>
            <person name="Shimokawa K."/>
            <person name="Bajic V.B."/>
            <person name="Brenner S.E."/>
            <person name="Batalov S."/>
            <person name="Forrest A.R."/>
            <person name="Zavolan M."/>
            <person name="Davis M.J."/>
            <person name="Wilming L.G."/>
            <person name="Aidinis V."/>
            <person name="Allen J.E."/>
            <person name="Ambesi-Impiombato A."/>
            <person name="Apweiler R."/>
            <person name="Aturaliya R.N."/>
            <person name="Bailey T.L."/>
            <person name="Bansal M."/>
            <person name="Baxter L."/>
            <person name="Beisel K.W."/>
            <person name="Bersano T."/>
            <person name="Bono H."/>
            <person name="Chalk A.M."/>
            <person name="Chiu K.P."/>
            <person name="Choudhary V."/>
            <person name="Christoffels A."/>
            <person name="Clutterbuck D.R."/>
            <person name="Crowe M.L."/>
            <person name="Dalla E."/>
            <person name="Dalrymple B.P."/>
            <person name="de Bono B."/>
            <person name="Della Gatta G."/>
            <person name="di Bernardo D."/>
            <person name="Down T."/>
            <person name="Engstrom P."/>
            <person name="Fagiolini M."/>
            <person name="Faulkner G."/>
            <person name="Fletcher C.F."/>
            <person name="Fukushima T."/>
            <person name="Furuno M."/>
            <person name="Futaki S."/>
            <person name="Gariboldi M."/>
            <person name="Georgii-Hemming P."/>
            <person name="Gingeras T.R."/>
            <person name="Gojobori T."/>
            <person name="Green R.E."/>
            <person name="Gustincich S."/>
            <person name="Harbers M."/>
            <person name="Hayashi Y."/>
            <person name="Hensch T.K."/>
            <person name="Hirokawa N."/>
            <person name="Hill D."/>
            <person name="Huminiecki L."/>
            <person name="Iacono M."/>
            <person name="Ikeo K."/>
            <person name="Iwama A."/>
            <person name="Ishikawa T."/>
            <person name="Jakt M."/>
            <person name="Kanapin A."/>
            <person name="Katoh M."/>
            <person name="Kawasawa Y."/>
            <person name="Kelso J."/>
            <person name="Kitamura H."/>
            <person name="Kitano H."/>
            <person name="Kollias G."/>
            <person name="Krishnan S.P."/>
            <person name="Kruger A."/>
            <person name="Kummerfeld S.K."/>
            <person name="Kurochkin I.V."/>
            <person name="Lareau L.F."/>
            <person name="Lazarevic D."/>
            <person name="Lipovich L."/>
            <person name="Liu J."/>
            <person name="Liuni S."/>
            <person name="McWilliam S."/>
            <person name="Madan Babu M."/>
            <person name="Madera M."/>
            <person name="Marchionni L."/>
            <person name="Matsuda H."/>
            <person name="Matsuzawa S."/>
            <person name="Miki H."/>
            <person name="Mignone F."/>
            <person name="Miyake S."/>
            <person name="Morris K."/>
            <person name="Mottagui-Tabar S."/>
            <person name="Mulder N."/>
            <person name="Nakano N."/>
            <person name="Nakauchi H."/>
            <person name="Ng P."/>
            <person name="Nilsson R."/>
            <person name="Nishiguchi S."/>
            <person name="Nishikawa S."/>
            <person name="Nori F."/>
            <person name="Ohara O."/>
            <person name="Okazaki Y."/>
            <person name="Orlando V."/>
            <person name="Pang K.C."/>
            <person name="Pavan W.J."/>
            <person name="Pavesi G."/>
            <person name="Pesole G."/>
            <person name="Petrovsky N."/>
            <person name="Piazza S."/>
            <person name="Reed J."/>
            <person name="Reid J.F."/>
            <person name="Ring B.Z."/>
            <person name="Ringwald M."/>
            <person name="Rost B."/>
            <person name="Ruan Y."/>
            <person name="Salzberg S.L."/>
            <person name="Sandelin A."/>
            <person name="Schneider C."/>
            <person name="Schoenbach C."/>
            <person name="Sekiguchi K."/>
            <person name="Semple C.A."/>
            <person name="Seno S."/>
            <person name="Sessa L."/>
            <person name="Sheng Y."/>
            <person name="Shibata Y."/>
            <person name="Shimada H."/>
            <person name="Shimada K."/>
            <person name="Silva D."/>
            <person name="Sinclair B."/>
            <person name="Sperling S."/>
            <person name="Stupka E."/>
            <person name="Sugiura K."/>
            <person name="Sultana R."/>
            <person name="Takenaka Y."/>
            <person name="Taki K."/>
            <person name="Tammoja K."/>
            <person name="Tan S.L."/>
            <person name="Tang S."/>
            <person name="Taylor M.S."/>
            <person name="Tegner J."/>
            <person name="Teichmann S.A."/>
            <person name="Ueda H.R."/>
            <person name="van Nimwegen E."/>
            <person name="Verardo R."/>
            <person name="Wei C.L."/>
            <person name="Yagi K."/>
            <person name="Yamanishi H."/>
            <person name="Zabarovsky E."/>
            <person name="Zhu S."/>
            <person name="Zimmer A."/>
            <person name="Hide W."/>
            <person name="Bult C."/>
            <person name="Grimmond S.M."/>
            <person name="Teasdale R.D."/>
            <person name="Liu E.T."/>
            <person name="Brusic V."/>
            <person name="Quackenbush J."/>
            <person name="Wahlestedt C."/>
            <person name="Mattick J.S."/>
            <person name="Hume D.A."/>
            <person name="Kai C."/>
            <person name="Sasaki D."/>
            <person name="Tomaru Y."/>
            <person name="Fukuda S."/>
            <person name="Kanamori-Katayama M."/>
            <person name="Suzuki M."/>
            <person name="Aoki J."/>
            <person name="Arakawa T."/>
            <person name="Iida J."/>
            <person name="Imamura K."/>
            <person name="Itoh M."/>
            <person name="Kato T."/>
            <person name="Kawaji H."/>
            <person name="Kawagashira N."/>
            <person name="Kawashima T."/>
            <person name="Kojima M."/>
            <person name="Kondo S."/>
            <person name="Konno H."/>
            <person name="Nakano K."/>
            <person name="Ninomiya N."/>
            <person name="Nishio T."/>
            <person name="Okada M."/>
            <person name="Plessy C."/>
            <person name="Shibata K."/>
            <person name="Shiraki T."/>
            <person name="Suzuki S."/>
            <person name="Tagami M."/>
            <person name="Waki K."/>
            <person name="Watahiki A."/>
            <person name="Okamura-Oho Y."/>
            <person name="Suzuki H."/>
            <person name="Kawai J."/>
            <person name="Hayashizaki Y."/>
        </authorList>
    </citation>
    <scope>NUCLEOTIDE SEQUENCE [LARGE SCALE MRNA] OF 60-293</scope>
    <source>
        <strain>C57BL/6J</strain>
        <tissue>Hypothalamus</tissue>
    </source>
</reference>
<reference key="4">
    <citation type="journal article" date="2010" name="Cell">
        <title>A tissue-specific atlas of mouse protein phosphorylation and expression.</title>
        <authorList>
            <person name="Huttlin E.L."/>
            <person name="Jedrychowski M.P."/>
            <person name="Elias J.E."/>
            <person name="Goswami T."/>
            <person name="Rad R."/>
            <person name="Beausoleil S.A."/>
            <person name="Villen J."/>
            <person name="Haas W."/>
            <person name="Sowa M.E."/>
            <person name="Gygi S.P."/>
        </authorList>
    </citation>
    <scope>IDENTIFICATION BY MASS SPECTROMETRY [LARGE SCALE ANALYSIS]</scope>
    <source>
        <tissue>Brain</tissue>
    </source>
</reference>
<reference key="5">
    <citation type="journal article" date="2012" name="Neuron">
        <title>High-resolution proteomics unravel architecture and molecular diversity of native AMPA receptor complexes.</title>
        <authorList>
            <person name="Schwenk J."/>
            <person name="Harmel N."/>
            <person name="Brechet A."/>
            <person name="Zolles G."/>
            <person name="Berkefeld H."/>
            <person name="Muller C.S."/>
            <person name="Bildl W."/>
            <person name="Baehrens D."/>
            <person name="Huber B."/>
            <person name="Kulik A."/>
            <person name="Klocker N."/>
            <person name="Schulte U."/>
            <person name="Fakler B."/>
        </authorList>
    </citation>
    <scope>IDENTIFICATION IN AMPAR COMPLEX</scope>
    <scope>TOPOLOGY</scope>
    <scope>SUBCELLULAR LOCATION</scope>
    <scope>TISSUE SPECIFICITY</scope>
</reference>
<reference key="6">
    <citation type="journal article" date="2016" name="Am. J. Hum. Genet.">
        <title>Loss-of-function mutations in FRRS1L lead to an epileptic-dyskinetic encephalopathy.</title>
        <authorList>
            <person name="Madeo M."/>
            <person name="Stewart M."/>
            <person name="Sun Y."/>
            <person name="Sahir N."/>
            <person name="Wiethoff S."/>
            <person name="Chandrasekar I."/>
            <person name="Yarrow A."/>
            <person name="Rosenfeld J.A."/>
            <person name="Yang Y."/>
            <person name="Cordeiro D."/>
            <person name="McCormick E.M."/>
            <person name="Muraresku C.C."/>
            <person name="Jepperson T.N."/>
            <person name="McBeth L.J."/>
            <person name="Seidahmed M.Z."/>
            <person name="El Khashab H.Y."/>
            <person name="Hamad M."/>
            <person name="Azzedine H."/>
            <person name="Clark K."/>
            <person name="Corrochano S."/>
            <person name="Wells S."/>
            <person name="Elting M.W."/>
            <person name="Weiss M.M."/>
            <person name="Burn S."/>
            <person name="Myers A."/>
            <person name="Landsverk M."/>
            <person name="Crotwell P.L."/>
            <person name="Waisfisz Q."/>
            <person name="Wolf N.I."/>
            <person name="Nolan P.M."/>
            <person name="Padilla-Lopez S."/>
            <person name="Houlden H."/>
            <person name="Lifton R."/>
            <person name="Mane S."/>
            <person name="Singh B.B."/>
            <person name="Falk M.J."/>
            <person name="Mercimek-Mahmutoglu S."/>
            <person name="Bilguvar K."/>
            <person name="Salih M.A."/>
            <person name="Acevedo-Arozena A."/>
            <person name="Kruer M.C."/>
        </authorList>
    </citation>
    <scope>TISSUE SPECIFICITY</scope>
    <scope>DEVELOPMENTAL STAGE</scope>
</reference>
<dbReference type="EMBL" id="AL831761">
    <property type="status" value="NOT_ANNOTATED_CDS"/>
    <property type="molecule type" value="Genomic_DNA"/>
</dbReference>
<dbReference type="EMBL" id="BX470220">
    <property type="status" value="NOT_ANNOTATED_CDS"/>
    <property type="molecule type" value="Genomic_DNA"/>
</dbReference>
<dbReference type="EMBL" id="BC132345">
    <property type="protein sequence ID" value="AAI32346.1"/>
    <property type="status" value="ALT_INIT"/>
    <property type="molecule type" value="mRNA"/>
</dbReference>
<dbReference type="EMBL" id="AK038461">
    <property type="protein sequence ID" value="BAC30008.1"/>
    <property type="molecule type" value="mRNA"/>
</dbReference>
<dbReference type="CCDS" id="CCDS51179.1"/>
<dbReference type="RefSeq" id="NP_001136437.1">
    <property type="nucleotide sequence ID" value="NM_001142965.2"/>
</dbReference>
<dbReference type="BioGRID" id="230949">
    <property type="interactions" value="4"/>
</dbReference>
<dbReference type="FunCoup" id="B1AXV0">
    <property type="interactions" value="986"/>
</dbReference>
<dbReference type="STRING" id="10090.ENSMUSP00000052507"/>
<dbReference type="GlyGen" id="B1AXV0">
    <property type="glycosylation" value="4 sites, 1 O-linked glycan (4 sites)"/>
</dbReference>
<dbReference type="iPTMnet" id="B1AXV0"/>
<dbReference type="PhosphoSitePlus" id="B1AXV0"/>
<dbReference type="SwissPalm" id="B1AXV0"/>
<dbReference type="PaxDb" id="10090-ENSMUSP00000052507"/>
<dbReference type="PeptideAtlas" id="B1AXV0"/>
<dbReference type="ProteomicsDB" id="267525"/>
<dbReference type="Antibodypedia" id="71944">
    <property type="antibodies" value="67 antibodies from 16 providers"/>
</dbReference>
<dbReference type="Ensembl" id="ENSMUST00000053681.6">
    <property type="protein sequence ID" value="ENSMUSP00000052507.6"/>
    <property type="gene ID" value="ENSMUSG00000045589.8"/>
</dbReference>
<dbReference type="GeneID" id="230235"/>
<dbReference type="KEGG" id="mmu:230235"/>
<dbReference type="UCSC" id="uc008sxx.2">
    <property type="organism name" value="mouse"/>
</dbReference>
<dbReference type="AGR" id="MGI:2442704"/>
<dbReference type="CTD" id="23732"/>
<dbReference type="MGI" id="MGI:2442704">
    <property type="gene designation" value="Frrs1l"/>
</dbReference>
<dbReference type="VEuPathDB" id="HostDB:ENSMUSG00000045589"/>
<dbReference type="eggNOG" id="KOG4293">
    <property type="taxonomic scope" value="Eukaryota"/>
</dbReference>
<dbReference type="GeneTree" id="ENSGT00940000159043"/>
<dbReference type="HOGENOM" id="CLU_069383_1_0_1"/>
<dbReference type="InParanoid" id="B1AXV0"/>
<dbReference type="OMA" id="DAETCEY"/>
<dbReference type="OrthoDB" id="6418377at2759"/>
<dbReference type="PhylomeDB" id="B1AXV0"/>
<dbReference type="TreeFam" id="TF316169"/>
<dbReference type="BRENDA" id="1.16.1.10">
    <property type="organism ID" value="3474"/>
</dbReference>
<dbReference type="BioGRID-ORCS" id="230235">
    <property type="hits" value="2 hits in 76 CRISPR screens"/>
</dbReference>
<dbReference type="CD-CODE" id="CE726F99">
    <property type="entry name" value="Postsynaptic density"/>
</dbReference>
<dbReference type="ChiTaRS" id="Frrs1l">
    <property type="organism name" value="mouse"/>
</dbReference>
<dbReference type="PRO" id="PR:B1AXV0"/>
<dbReference type="Proteomes" id="UP000000589">
    <property type="component" value="Chromosome 4"/>
</dbReference>
<dbReference type="RNAct" id="B1AXV0">
    <property type="molecule type" value="protein"/>
</dbReference>
<dbReference type="Bgee" id="ENSMUSG00000045589">
    <property type="expression patterns" value="Expressed in cerebellar vermis and 132 other cell types or tissues"/>
</dbReference>
<dbReference type="ExpressionAtlas" id="B1AXV0">
    <property type="expression patterns" value="baseline and differential"/>
</dbReference>
<dbReference type="GO" id="GO:0005789">
    <property type="term" value="C:endoplasmic reticulum membrane"/>
    <property type="evidence" value="ECO:0000314"/>
    <property type="project" value="SynGO"/>
</dbReference>
<dbReference type="GO" id="GO:0005886">
    <property type="term" value="C:plasma membrane"/>
    <property type="evidence" value="ECO:0000266"/>
    <property type="project" value="MGI"/>
</dbReference>
<dbReference type="GO" id="GO:0098794">
    <property type="term" value="C:postsynapse"/>
    <property type="evidence" value="ECO:0000314"/>
    <property type="project" value="SynGO"/>
</dbReference>
<dbReference type="GO" id="GO:0045505">
    <property type="term" value="F:dynein intermediate chain binding"/>
    <property type="evidence" value="ECO:0000353"/>
    <property type="project" value="MGI"/>
</dbReference>
<dbReference type="GO" id="GO:0044877">
    <property type="term" value="F:protein-containing complex binding"/>
    <property type="evidence" value="ECO:0000314"/>
    <property type="project" value="MGI"/>
</dbReference>
<dbReference type="GO" id="GO:1904717">
    <property type="term" value="P:regulation of AMPA glutamate receptor clustering"/>
    <property type="evidence" value="ECO:0000315"/>
    <property type="project" value="MGI"/>
</dbReference>
<dbReference type="GO" id="GO:1900449">
    <property type="term" value="P:regulation of glutamate receptor signaling pathway"/>
    <property type="evidence" value="ECO:0000250"/>
    <property type="project" value="UniProtKB"/>
</dbReference>
<dbReference type="GO" id="GO:0099072">
    <property type="term" value="P:regulation of postsynaptic membrane neurotransmitter receptor levels"/>
    <property type="evidence" value="ECO:0007669"/>
    <property type="project" value="Ensembl"/>
</dbReference>
<dbReference type="GO" id="GO:0051966">
    <property type="term" value="P:regulation of synaptic transmission, glutamatergic"/>
    <property type="evidence" value="ECO:0000315"/>
    <property type="project" value="MGI"/>
</dbReference>
<dbReference type="CDD" id="cd09628">
    <property type="entry name" value="DOMON_SDR_2_like"/>
    <property type="match status" value="1"/>
</dbReference>
<dbReference type="InterPro" id="IPR005018">
    <property type="entry name" value="DOMON_domain"/>
</dbReference>
<dbReference type="InterPro" id="IPR042789">
    <property type="entry name" value="FRRS1L"/>
</dbReference>
<dbReference type="PANTHER" id="PTHR46902">
    <property type="entry name" value="DOMON DOMAIN-CONTAINING PROTEIN FRRS1L"/>
    <property type="match status" value="1"/>
</dbReference>
<dbReference type="PANTHER" id="PTHR46902:SF1">
    <property type="entry name" value="DOMON DOMAIN-CONTAINING PROTEIN FRRS1L"/>
    <property type="match status" value="1"/>
</dbReference>
<dbReference type="Pfam" id="PF03351">
    <property type="entry name" value="DOMON"/>
    <property type="match status" value="1"/>
</dbReference>
<dbReference type="SMART" id="SM00664">
    <property type="entry name" value="DoH"/>
    <property type="match status" value="1"/>
</dbReference>
<dbReference type="PROSITE" id="PS50836">
    <property type="entry name" value="DOMON"/>
    <property type="match status" value="1"/>
</dbReference>
<keyword id="KW-1003">Cell membrane</keyword>
<keyword id="KW-0472">Membrane</keyword>
<keyword id="KW-1185">Reference proteome</keyword>
<keyword id="KW-0732">Signal</keyword>
<keyword id="KW-0770">Synapse</keyword>
<keyword id="KW-0812">Transmembrane</keyword>
<keyword id="KW-1133">Transmembrane helix</keyword>
<proteinExistence type="evidence at protein level"/>
<comment type="function">
    <text evidence="1">Important modulator of glutamate signaling pathway.</text>
</comment>
<comment type="subunit">
    <text evidence="5">Component of the outer core of AMPAR complex. AMPAR complex consists of an inner core made of 4 pore-forming GluA/GRIA proteins (GRIA1, GRIA2, GRIA3 and GRIA4) and 4 major auxiliary subunits arranged in a twofold symmetry. One of the two pairs of distinct binding sites is occupied either by CNIH2, CNIH3 or CACNG2, CACNG3. The other harbors CACNG2, CACNG3, CACNG4, CACNG8 or GSG1L. This inner core of AMPAR complex is complemented by outer core constituents binding directly to the GluA/GRIA proteins at sites distinct from the interaction sites of the inner core constituents. Outer core constituents include at least PRRT1, PRRT2, CKAMP44/SHISA9, FRRS1L and NRN1. The proteins of the inner and outer core serve as a platform for other, more peripherally associated AMPAR constituents. Alone or in combination, these auxiliary subunits control the gating and pharmacology of the AMPAR complex and profoundly impact their biogenesis and protein processing.</text>
</comment>
<comment type="subcellular location">
    <subcellularLocation>
        <location evidence="8">Cell membrane</location>
    </subcellularLocation>
    <subcellularLocation>
        <location evidence="8">Synapse</location>
    </subcellularLocation>
</comment>
<comment type="tissue specificity">
    <text evidence="5 6">Expressed in the brain (at protein level) (PubMed:22632720). In embryos expression is evident in the ventral forebrain, but a lower level is seen in the remainder of the embryos. In the adult brain, expressed in the cortex, cerebellum, hippocampus and basal ganglia (PubMed:27236917).</text>
</comment>
<comment type="developmental stage">
    <text evidence="6">Expressed in 12.5 dpc embryos.</text>
</comment>
<comment type="sequence caution" evidence="7">
    <conflict type="erroneous initiation">
        <sequence resource="EMBL-CDS" id="AAI32346"/>
    </conflict>
    <text>Extended N-terminus.</text>
</comment>
<gene>
    <name type="primary">Frrs1l</name>
</gene>
<protein>
    <recommendedName>
        <fullName>DOMON domain-containing protein FRRS1L</fullName>
    </recommendedName>
    <alternativeName>
        <fullName>Ferric-chelate reductase 1-like protein</fullName>
    </alternativeName>
</protein>
<sequence>MAGQPLRRPAWVPLLLRLLLAGIAACDASPADDSAGPGGRGPRGRARGDAGADEAVPRHDSSYGTFASEFYDLRYLSEEGYPFPTAPPVDPFAKIKVEDCGRTKGCFRYGKPGCNAETCDYFLSYRMIGADVEFELSADTDGWVAVGFSSDKKMGGDDVMACVHDDNGRVRIQHFYNVGQWAKEVQRNPARDEEGVFENNRVTCRFKRPVNVPRDETIVDLHLSWYYLFAWGPAIQGAITRHDIDSPPASERVVSIYKYEDIFMPSAAYQTFSSPFCLLLIVALTFYLLMGTP</sequence>
<evidence type="ECO:0000250" key="1">
    <source>
        <dbReference type="UniProtKB" id="Q9P0K9"/>
    </source>
</evidence>
<evidence type="ECO:0000255" key="2"/>
<evidence type="ECO:0000255" key="3">
    <source>
        <dbReference type="PROSITE-ProRule" id="PRU00246"/>
    </source>
</evidence>
<evidence type="ECO:0000256" key="4">
    <source>
        <dbReference type="SAM" id="MobiDB-lite"/>
    </source>
</evidence>
<evidence type="ECO:0000269" key="5">
    <source>
    </source>
</evidence>
<evidence type="ECO:0000269" key="6">
    <source>
    </source>
</evidence>
<evidence type="ECO:0000305" key="7"/>
<evidence type="ECO:0000305" key="8">
    <source>
    </source>
</evidence>